<dbReference type="EMBL" id="AK136054">
    <property type="protein sequence ID" value="BAE22798.1"/>
    <property type="molecule type" value="mRNA"/>
</dbReference>
<dbReference type="EMBL" id="AK170750">
    <property type="protein sequence ID" value="BAE42001.1"/>
    <property type="molecule type" value="mRNA"/>
</dbReference>
<dbReference type="CCDS" id="CCDS24115.1"/>
<dbReference type="RefSeq" id="NP_001028503.2">
    <property type="nucleotide sequence ID" value="NM_001033331.2"/>
</dbReference>
<dbReference type="RefSeq" id="NP_001073345.1">
    <property type="nucleotide sequence ID" value="NM_001079876.1"/>
</dbReference>
<dbReference type="RefSeq" id="NP_001271273.1">
    <property type="nucleotide sequence ID" value="NM_001284344.1"/>
</dbReference>
<dbReference type="RefSeq" id="XP_011241747.1">
    <property type="nucleotide sequence ID" value="XM_011243445.1"/>
</dbReference>
<dbReference type="SMR" id="Q3UWW6"/>
<dbReference type="BioGRID" id="231879">
    <property type="interactions" value="2"/>
</dbReference>
<dbReference type="FunCoup" id="Q3UWW6">
    <property type="interactions" value="95"/>
</dbReference>
<dbReference type="IntAct" id="Q3UWW6">
    <property type="interactions" value="1"/>
</dbReference>
<dbReference type="STRING" id="10090.ENSMUSP00000096973"/>
<dbReference type="iPTMnet" id="Q3UWW6"/>
<dbReference type="PhosphoSitePlus" id="Q3UWW6"/>
<dbReference type="jPOST" id="Q3UWW6"/>
<dbReference type="PaxDb" id="10090-ENSMUSP00000096973"/>
<dbReference type="PeptideAtlas" id="Q3UWW6"/>
<dbReference type="ProteomicsDB" id="265725"/>
<dbReference type="Pumba" id="Q3UWW6"/>
<dbReference type="DNASU" id="237436"/>
<dbReference type="GeneID" id="237436"/>
<dbReference type="KEGG" id="mmu:237436"/>
<dbReference type="UCSC" id="uc007gsd.1">
    <property type="organism name" value="mouse"/>
</dbReference>
<dbReference type="AGR" id="MGI:1918780"/>
<dbReference type="CTD" id="283431"/>
<dbReference type="MGI" id="MGI:1918780">
    <property type="gene designation" value="Gas2l3"/>
</dbReference>
<dbReference type="eggNOG" id="KOG0516">
    <property type="taxonomic scope" value="Eukaryota"/>
</dbReference>
<dbReference type="InParanoid" id="Q3UWW6"/>
<dbReference type="OrthoDB" id="2250192at2759"/>
<dbReference type="PhylomeDB" id="Q3UWW6"/>
<dbReference type="TreeFam" id="TF323754"/>
<dbReference type="BioGRID-ORCS" id="237436">
    <property type="hits" value="2 hits in 76 CRISPR screens"/>
</dbReference>
<dbReference type="PRO" id="PR:Q3UWW6"/>
<dbReference type="Proteomes" id="UP000000589">
    <property type="component" value="Unplaced"/>
</dbReference>
<dbReference type="RNAct" id="Q3UWW6">
    <property type="molecule type" value="protein"/>
</dbReference>
<dbReference type="GO" id="GO:0015629">
    <property type="term" value="C:actin cytoskeleton"/>
    <property type="evidence" value="ECO:0000250"/>
    <property type="project" value="UniProtKB"/>
</dbReference>
<dbReference type="GO" id="GO:0005737">
    <property type="term" value="C:cytoplasm"/>
    <property type="evidence" value="ECO:0007669"/>
    <property type="project" value="UniProtKB-SubCell"/>
</dbReference>
<dbReference type="GO" id="GO:0005874">
    <property type="term" value="C:microtubule"/>
    <property type="evidence" value="ECO:0007669"/>
    <property type="project" value="UniProtKB-KW"/>
</dbReference>
<dbReference type="GO" id="GO:0015630">
    <property type="term" value="C:microtubule cytoskeleton"/>
    <property type="evidence" value="ECO:0000250"/>
    <property type="project" value="UniProtKB"/>
</dbReference>
<dbReference type="GO" id="GO:0003779">
    <property type="term" value="F:actin binding"/>
    <property type="evidence" value="ECO:0000250"/>
    <property type="project" value="UniProtKB"/>
</dbReference>
<dbReference type="GO" id="GO:0008017">
    <property type="term" value="F:microtubule binding"/>
    <property type="evidence" value="ECO:0000250"/>
    <property type="project" value="UniProtKB"/>
</dbReference>
<dbReference type="GO" id="GO:0030036">
    <property type="term" value="P:actin cytoskeleton organization"/>
    <property type="evidence" value="ECO:0000250"/>
    <property type="project" value="UniProtKB"/>
</dbReference>
<dbReference type="GO" id="GO:0000226">
    <property type="term" value="P:microtubule cytoskeleton organization"/>
    <property type="evidence" value="ECO:0000250"/>
    <property type="project" value="UniProtKB"/>
</dbReference>
<dbReference type="GO" id="GO:0009617">
    <property type="term" value="P:response to bacterium"/>
    <property type="evidence" value="ECO:0000270"/>
    <property type="project" value="MGI"/>
</dbReference>
<dbReference type="CDD" id="cd21269">
    <property type="entry name" value="CH_GAS2L3"/>
    <property type="match status" value="1"/>
</dbReference>
<dbReference type="FunFam" id="1.10.418.10:FF:000052">
    <property type="entry name" value="Growth arrest specific 2"/>
    <property type="match status" value="1"/>
</dbReference>
<dbReference type="FunFam" id="3.30.920.20:FF:000003">
    <property type="entry name" value="Growth arrest-specific 2 like 3"/>
    <property type="match status" value="1"/>
</dbReference>
<dbReference type="Gene3D" id="1.10.418.10">
    <property type="entry name" value="Calponin-like domain"/>
    <property type="match status" value="1"/>
</dbReference>
<dbReference type="Gene3D" id="3.30.920.20">
    <property type="entry name" value="Gas2-like domain"/>
    <property type="match status" value="1"/>
</dbReference>
<dbReference type="InterPro" id="IPR001715">
    <property type="entry name" value="CH_dom"/>
</dbReference>
<dbReference type="InterPro" id="IPR036872">
    <property type="entry name" value="CH_dom_sf"/>
</dbReference>
<dbReference type="InterPro" id="IPR003108">
    <property type="entry name" value="GAR_dom"/>
</dbReference>
<dbReference type="InterPro" id="IPR036534">
    <property type="entry name" value="GAR_dom_sf"/>
</dbReference>
<dbReference type="PANTHER" id="PTHR46756:SF7">
    <property type="entry name" value="GAS2-LIKE PROTEIN 3"/>
    <property type="match status" value="1"/>
</dbReference>
<dbReference type="PANTHER" id="PTHR46756">
    <property type="entry name" value="TRANSGELIN"/>
    <property type="match status" value="1"/>
</dbReference>
<dbReference type="Pfam" id="PF00307">
    <property type="entry name" value="CH"/>
    <property type="match status" value="1"/>
</dbReference>
<dbReference type="Pfam" id="PF02187">
    <property type="entry name" value="GAS2"/>
    <property type="match status" value="1"/>
</dbReference>
<dbReference type="SMART" id="SM00033">
    <property type="entry name" value="CH"/>
    <property type="match status" value="1"/>
</dbReference>
<dbReference type="SMART" id="SM00243">
    <property type="entry name" value="GAS2"/>
    <property type="match status" value="1"/>
</dbReference>
<dbReference type="SUPFAM" id="SSF47576">
    <property type="entry name" value="Calponin-homology domain, CH-domain"/>
    <property type="match status" value="1"/>
</dbReference>
<dbReference type="SUPFAM" id="SSF143575">
    <property type="entry name" value="GAS2 domain-like"/>
    <property type="match status" value="1"/>
</dbReference>
<dbReference type="PROSITE" id="PS50021">
    <property type="entry name" value="CH"/>
    <property type="match status" value="1"/>
</dbReference>
<dbReference type="PROSITE" id="PS51460">
    <property type="entry name" value="GAR"/>
    <property type="match status" value="1"/>
</dbReference>
<proteinExistence type="evidence at protein level"/>
<feature type="chain" id="PRO_0000322985" description="GAS2-like protein 3">
    <location>
        <begin position="1"/>
        <end position="683"/>
    </location>
</feature>
<feature type="domain" description="Calponin-homology (CH)" evidence="3">
    <location>
        <begin position="50"/>
        <end position="170"/>
    </location>
</feature>
<feature type="domain" description="GAR" evidence="4">
    <location>
        <begin position="210"/>
        <end position="283"/>
    </location>
</feature>
<feature type="region of interest" description="Disordered" evidence="5">
    <location>
        <begin position="301"/>
        <end position="683"/>
    </location>
</feature>
<feature type="compositionally biased region" description="Polar residues" evidence="5">
    <location>
        <begin position="397"/>
        <end position="424"/>
    </location>
</feature>
<feature type="compositionally biased region" description="Polar residues" evidence="5">
    <location>
        <begin position="512"/>
        <end position="533"/>
    </location>
</feature>
<feature type="compositionally biased region" description="Polar residues" evidence="5">
    <location>
        <begin position="541"/>
        <end position="582"/>
    </location>
</feature>
<feature type="compositionally biased region" description="Polar residues" evidence="5">
    <location>
        <begin position="606"/>
        <end position="621"/>
    </location>
</feature>
<feature type="compositionally biased region" description="Low complexity" evidence="5">
    <location>
        <begin position="630"/>
        <end position="643"/>
    </location>
</feature>
<feature type="modified residue" description="Phosphothreonine" evidence="2">
    <location>
        <position position="435"/>
    </location>
</feature>
<feature type="modified residue" description="Phosphoserine" evidence="2">
    <location>
        <position position="559"/>
    </location>
</feature>
<feature type="sequence conflict" description="In Ref. 1; BAE42001." evidence="7" ref="1">
    <original>K</original>
    <variation>Q</variation>
    <location>
        <position position="315"/>
    </location>
</feature>
<protein>
    <recommendedName>
        <fullName>GAS2-like protein 3</fullName>
    </recommendedName>
    <alternativeName>
        <fullName>Growth arrest-specific protein 2-like 3</fullName>
    </alternativeName>
</protein>
<name>GA2L3_MOUSE</name>
<accession>Q3UWW6</accession>
<accession>Q3TCF5</accession>
<sequence length="683" mass="74235">MTMQPAIQVWFGEDLPLSPRCPLTPRHGPGLADVCQYDEWIAVRHEATLLPMQEDLSIWLSGLLGVDIKAERLLEELDNGVLLCQLINVLQNMVKGCHSDEPGNFPMRKVPCKKDAASGSFFARDNTANFLHWCRHIGVDETYLFESEGLVLHKDPRQVYLCLLEIGRIVSRYGVEPPVLVKLEKEIELEETLLNASGLEESISIPKSCCQQEELHEAVKHIAEDPPCSCSHRFSIEYLSEGRYRLGEKILFIRMLHGKHVMVRVGGGWDTLQGFLLKYDPCRILQFATLEQKILAFQKGVSNESVPDSPARTPKPPEMNPLSAVNMFQKQNLRPGTPVSVPKNKEKQVRLPGARLPASSVKGNLASPSTRAKRPDSPASFPHPKVTSLKDAAKKTTAPSNSVSQSLASPNPGSKPSTAQCASESSRKCVTFPKTAQTKAIPAQNSRDLSKSRLLPSKSPGKMEPKHLKHNHLSSRDESRINLSSKSPKLPKGAMHGRPNPSPFQPPAKVTKPSSKTGAIGLGTQSQPPTRTPRSGAVSAQRLQSTLNLNSPASVCSGSSAKATQGSKGKNTVSVAKKQPQSKGVCRNPGPGSSKSPGRTPLSIVTVPQSATKTETVSKSAKTAMKGQYSAKGPPKSSKPPTSFRDPPSSGKGADSGDKMPTARKKEEDDHYFVMTGNKKLRK</sequence>
<reference key="1">
    <citation type="journal article" date="2005" name="Science">
        <title>The transcriptional landscape of the mammalian genome.</title>
        <authorList>
            <person name="Carninci P."/>
            <person name="Kasukawa T."/>
            <person name="Katayama S."/>
            <person name="Gough J."/>
            <person name="Frith M.C."/>
            <person name="Maeda N."/>
            <person name="Oyama R."/>
            <person name="Ravasi T."/>
            <person name="Lenhard B."/>
            <person name="Wells C."/>
            <person name="Kodzius R."/>
            <person name="Shimokawa K."/>
            <person name="Bajic V.B."/>
            <person name="Brenner S.E."/>
            <person name="Batalov S."/>
            <person name="Forrest A.R."/>
            <person name="Zavolan M."/>
            <person name="Davis M.J."/>
            <person name="Wilming L.G."/>
            <person name="Aidinis V."/>
            <person name="Allen J.E."/>
            <person name="Ambesi-Impiombato A."/>
            <person name="Apweiler R."/>
            <person name="Aturaliya R.N."/>
            <person name="Bailey T.L."/>
            <person name="Bansal M."/>
            <person name="Baxter L."/>
            <person name="Beisel K.W."/>
            <person name="Bersano T."/>
            <person name="Bono H."/>
            <person name="Chalk A.M."/>
            <person name="Chiu K.P."/>
            <person name="Choudhary V."/>
            <person name="Christoffels A."/>
            <person name="Clutterbuck D.R."/>
            <person name="Crowe M.L."/>
            <person name="Dalla E."/>
            <person name="Dalrymple B.P."/>
            <person name="de Bono B."/>
            <person name="Della Gatta G."/>
            <person name="di Bernardo D."/>
            <person name="Down T."/>
            <person name="Engstrom P."/>
            <person name="Fagiolini M."/>
            <person name="Faulkner G."/>
            <person name="Fletcher C.F."/>
            <person name="Fukushima T."/>
            <person name="Furuno M."/>
            <person name="Futaki S."/>
            <person name="Gariboldi M."/>
            <person name="Georgii-Hemming P."/>
            <person name="Gingeras T.R."/>
            <person name="Gojobori T."/>
            <person name="Green R.E."/>
            <person name="Gustincich S."/>
            <person name="Harbers M."/>
            <person name="Hayashi Y."/>
            <person name="Hensch T.K."/>
            <person name="Hirokawa N."/>
            <person name="Hill D."/>
            <person name="Huminiecki L."/>
            <person name="Iacono M."/>
            <person name="Ikeo K."/>
            <person name="Iwama A."/>
            <person name="Ishikawa T."/>
            <person name="Jakt M."/>
            <person name="Kanapin A."/>
            <person name="Katoh M."/>
            <person name="Kawasawa Y."/>
            <person name="Kelso J."/>
            <person name="Kitamura H."/>
            <person name="Kitano H."/>
            <person name="Kollias G."/>
            <person name="Krishnan S.P."/>
            <person name="Kruger A."/>
            <person name="Kummerfeld S.K."/>
            <person name="Kurochkin I.V."/>
            <person name="Lareau L.F."/>
            <person name="Lazarevic D."/>
            <person name="Lipovich L."/>
            <person name="Liu J."/>
            <person name="Liuni S."/>
            <person name="McWilliam S."/>
            <person name="Madan Babu M."/>
            <person name="Madera M."/>
            <person name="Marchionni L."/>
            <person name="Matsuda H."/>
            <person name="Matsuzawa S."/>
            <person name="Miki H."/>
            <person name="Mignone F."/>
            <person name="Miyake S."/>
            <person name="Morris K."/>
            <person name="Mottagui-Tabar S."/>
            <person name="Mulder N."/>
            <person name="Nakano N."/>
            <person name="Nakauchi H."/>
            <person name="Ng P."/>
            <person name="Nilsson R."/>
            <person name="Nishiguchi S."/>
            <person name="Nishikawa S."/>
            <person name="Nori F."/>
            <person name="Ohara O."/>
            <person name="Okazaki Y."/>
            <person name="Orlando V."/>
            <person name="Pang K.C."/>
            <person name="Pavan W.J."/>
            <person name="Pavesi G."/>
            <person name="Pesole G."/>
            <person name="Petrovsky N."/>
            <person name="Piazza S."/>
            <person name="Reed J."/>
            <person name="Reid J.F."/>
            <person name="Ring B.Z."/>
            <person name="Ringwald M."/>
            <person name="Rost B."/>
            <person name="Ruan Y."/>
            <person name="Salzberg S.L."/>
            <person name="Sandelin A."/>
            <person name="Schneider C."/>
            <person name="Schoenbach C."/>
            <person name="Sekiguchi K."/>
            <person name="Semple C.A."/>
            <person name="Seno S."/>
            <person name="Sessa L."/>
            <person name="Sheng Y."/>
            <person name="Shibata Y."/>
            <person name="Shimada H."/>
            <person name="Shimada K."/>
            <person name="Silva D."/>
            <person name="Sinclair B."/>
            <person name="Sperling S."/>
            <person name="Stupka E."/>
            <person name="Sugiura K."/>
            <person name="Sultana R."/>
            <person name="Takenaka Y."/>
            <person name="Taki K."/>
            <person name="Tammoja K."/>
            <person name="Tan S.L."/>
            <person name="Tang S."/>
            <person name="Taylor M.S."/>
            <person name="Tegner J."/>
            <person name="Teichmann S.A."/>
            <person name="Ueda H.R."/>
            <person name="van Nimwegen E."/>
            <person name="Verardo R."/>
            <person name="Wei C.L."/>
            <person name="Yagi K."/>
            <person name="Yamanishi H."/>
            <person name="Zabarovsky E."/>
            <person name="Zhu S."/>
            <person name="Zimmer A."/>
            <person name="Hide W."/>
            <person name="Bult C."/>
            <person name="Grimmond S.M."/>
            <person name="Teasdale R.D."/>
            <person name="Liu E.T."/>
            <person name="Brusic V."/>
            <person name="Quackenbush J."/>
            <person name="Wahlestedt C."/>
            <person name="Mattick J.S."/>
            <person name="Hume D.A."/>
            <person name="Kai C."/>
            <person name="Sasaki D."/>
            <person name="Tomaru Y."/>
            <person name="Fukuda S."/>
            <person name="Kanamori-Katayama M."/>
            <person name="Suzuki M."/>
            <person name="Aoki J."/>
            <person name="Arakawa T."/>
            <person name="Iida J."/>
            <person name="Imamura K."/>
            <person name="Itoh M."/>
            <person name="Kato T."/>
            <person name="Kawaji H."/>
            <person name="Kawagashira N."/>
            <person name="Kawashima T."/>
            <person name="Kojima M."/>
            <person name="Kondo S."/>
            <person name="Konno H."/>
            <person name="Nakano K."/>
            <person name="Ninomiya N."/>
            <person name="Nishio T."/>
            <person name="Okada M."/>
            <person name="Plessy C."/>
            <person name="Shibata K."/>
            <person name="Shiraki T."/>
            <person name="Suzuki S."/>
            <person name="Tagami M."/>
            <person name="Waki K."/>
            <person name="Watahiki A."/>
            <person name="Okamura-Oho Y."/>
            <person name="Suzuki H."/>
            <person name="Kawai J."/>
            <person name="Hayashizaki Y."/>
        </authorList>
    </citation>
    <scope>NUCLEOTIDE SEQUENCE [LARGE SCALE MRNA]</scope>
    <source>
        <strain>C57BL/6J</strain>
        <strain>NOD</strain>
    </source>
</reference>
<reference key="2">
    <citation type="journal article" date="2014" name="J. Cell Sci.">
        <title>GAS2-like proteins mediate communication between microtubules and actin through interactions with end-binding proteins.</title>
        <authorList>
            <person name="Stroud M.J."/>
            <person name="Nazgiewicz A."/>
            <person name="McKenzie E.A."/>
            <person name="Wang Y."/>
            <person name="Kammerer R.A."/>
            <person name="Ballestrem C."/>
        </authorList>
    </citation>
    <scope>INTERACTION WITH MAPRE1</scope>
</reference>
<keyword id="KW-0009">Actin-binding</keyword>
<keyword id="KW-0963">Cytoplasm</keyword>
<keyword id="KW-0206">Cytoskeleton</keyword>
<keyword id="KW-0493">Microtubule</keyword>
<keyword id="KW-0597">Phosphoprotein</keyword>
<keyword id="KW-1185">Reference proteome</keyword>
<evidence type="ECO:0000250" key="1"/>
<evidence type="ECO:0000250" key="2">
    <source>
        <dbReference type="UniProtKB" id="Q86XJ1"/>
    </source>
</evidence>
<evidence type="ECO:0000255" key="3">
    <source>
        <dbReference type="PROSITE-ProRule" id="PRU00044"/>
    </source>
</evidence>
<evidence type="ECO:0000255" key="4">
    <source>
        <dbReference type="PROSITE-ProRule" id="PRU00792"/>
    </source>
</evidence>
<evidence type="ECO:0000256" key="5">
    <source>
        <dbReference type="SAM" id="MobiDB-lite"/>
    </source>
</evidence>
<evidence type="ECO:0000269" key="6">
    <source>
    </source>
</evidence>
<evidence type="ECO:0000305" key="7"/>
<organism>
    <name type="scientific">Mus musculus</name>
    <name type="common">Mouse</name>
    <dbReference type="NCBI Taxonomy" id="10090"/>
    <lineage>
        <taxon>Eukaryota</taxon>
        <taxon>Metazoa</taxon>
        <taxon>Chordata</taxon>
        <taxon>Craniata</taxon>
        <taxon>Vertebrata</taxon>
        <taxon>Euteleostomi</taxon>
        <taxon>Mammalia</taxon>
        <taxon>Eutheria</taxon>
        <taxon>Euarchontoglires</taxon>
        <taxon>Glires</taxon>
        <taxon>Rodentia</taxon>
        <taxon>Myomorpha</taxon>
        <taxon>Muroidea</taxon>
        <taxon>Muridae</taxon>
        <taxon>Murinae</taxon>
        <taxon>Mus</taxon>
        <taxon>Mus</taxon>
    </lineage>
</organism>
<comment type="function">
    <text evidence="1">Cytoskeletal linker protein. May promote and stabilize the formation of the actin and microtubule network (By similarity).</text>
</comment>
<comment type="subunit">
    <text evidence="2 6">Interacts (via CH domain) with F-actin (By similarity). Interacts (via C terminus) with microtubules (By similarity). Interacts with MAPRE1 (PubMed:24706950).</text>
</comment>
<comment type="subcellular location">
    <subcellularLocation>
        <location evidence="2">Cytoplasm</location>
    </subcellularLocation>
    <subcellularLocation>
        <location evidence="2">Cytoplasm</location>
        <location evidence="2">Cytoskeleton</location>
    </subcellularLocation>
    <text evidence="2">Localizes to microtubule and actin cytoskeletons.</text>
</comment>
<comment type="domain">
    <text evidence="1">The GAR domain modulates the binding strength to each cytoskeletal network.</text>
</comment>
<comment type="similarity">
    <text evidence="7">Belongs to the GAS2 family.</text>
</comment>
<comment type="caution">
    <text evidence="7">It is uncertain whether Met-1 or Met-3 is the initiator.</text>
</comment>
<gene>
    <name type="primary">Gas2l3</name>
</gene>